<dbReference type="EC" id="7.1.1.2"/>
<dbReference type="EMBL" id="AJ309867">
    <property type="protein sequence ID" value="CAC37998.1"/>
    <property type="molecule type" value="Genomic_DNA"/>
</dbReference>
<dbReference type="RefSeq" id="NP_114355.1">
    <property type="nucleotide sequence ID" value="NC_002765.1"/>
</dbReference>
<dbReference type="SMR" id="Q94Z64"/>
<dbReference type="GeneID" id="803048"/>
<dbReference type="CTD" id="4539"/>
<dbReference type="GO" id="GO:0005743">
    <property type="term" value="C:mitochondrial inner membrane"/>
    <property type="evidence" value="ECO:0000250"/>
    <property type="project" value="UniProtKB"/>
</dbReference>
<dbReference type="GO" id="GO:0045271">
    <property type="term" value="C:respiratory chain complex I"/>
    <property type="evidence" value="ECO:0000250"/>
    <property type="project" value="UniProtKB"/>
</dbReference>
<dbReference type="GO" id="GO:0008137">
    <property type="term" value="F:NADH dehydrogenase (ubiquinone) activity"/>
    <property type="evidence" value="ECO:0000250"/>
    <property type="project" value="UniProtKB"/>
</dbReference>
<dbReference type="GO" id="GO:0042773">
    <property type="term" value="P:ATP synthesis coupled electron transport"/>
    <property type="evidence" value="ECO:0007669"/>
    <property type="project" value="InterPro"/>
</dbReference>
<dbReference type="FunFam" id="1.10.287.3510:FF:000002">
    <property type="entry name" value="NADH-ubiquinone oxidoreductase chain 4L"/>
    <property type="match status" value="1"/>
</dbReference>
<dbReference type="Gene3D" id="1.10.287.3510">
    <property type="match status" value="1"/>
</dbReference>
<dbReference type="InterPro" id="IPR001133">
    <property type="entry name" value="NADH_UbQ_OxRdtase_chain4L/K"/>
</dbReference>
<dbReference type="InterPro" id="IPR039428">
    <property type="entry name" value="NUOK/Mnh_C1-like"/>
</dbReference>
<dbReference type="PANTHER" id="PTHR11434:SF0">
    <property type="entry name" value="NADH-UBIQUINONE OXIDOREDUCTASE CHAIN 4L"/>
    <property type="match status" value="1"/>
</dbReference>
<dbReference type="PANTHER" id="PTHR11434">
    <property type="entry name" value="NADH-UBIQUINONE OXIDOREDUCTASE SUBUNIT ND4L"/>
    <property type="match status" value="1"/>
</dbReference>
<dbReference type="Pfam" id="PF00420">
    <property type="entry name" value="Oxidored_q2"/>
    <property type="match status" value="1"/>
</dbReference>
<keyword id="KW-0249">Electron transport</keyword>
<keyword id="KW-0472">Membrane</keyword>
<keyword id="KW-0496">Mitochondrion</keyword>
<keyword id="KW-0999">Mitochondrion inner membrane</keyword>
<keyword id="KW-0520">NAD</keyword>
<keyword id="KW-0679">Respiratory chain</keyword>
<keyword id="KW-1278">Translocase</keyword>
<keyword id="KW-0812">Transmembrane</keyword>
<keyword id="KW-1133">Transmembrane helix</keyword>
<keyword id="KW-0813">Transport</keyword>
<keyword id="KW-0830">Ubiquinone</keyword>
<evidence type="ECO:0000250" key="1">
    <source>
        <dbReference type="UniProtKB" id="P03901"/>
    </source>
</evidence>
<evidence type="ECO:0000250" key="2">
    <source>
        <dbReference type="UniProtKB" id="P03902"/>
    </source>
</evidence>
<evidence type="ECO:0000255" key="3"/>
<evidence type="ECO:0000305" key="4"/>
<proteinExistence type="inferred from homology"/>
<geneLocation type="mitochondrion"/>
<comment type="function">
    <text evidence="1">Core subunit of the mitochondrial membrane respiratory chain NADH dehydrogenase (Complex I) which catalyzes electron transfer from NADH through the respiratory chain, using ubiquinone as an electron acceptor. Part of the enzyme membrane arm which is embedded in the lipid bilayer and involved in proton translocation.</text>
</comment>
<comment type="catalytic activity">
    <reaction evidence="1">
        <text>a ubiquinone + NADH + 5 H(+)(in) = a ubiquinol + NAD(+) + 4 H(+)(out)</text>
        <dbReference type="Rhea" id="RHEA:29091"/>
        <dbReference type="Rhea" id="RHEA-COMP:9565"/>
        <dbReference type="Rhea" id="RHEA-COMP:9566"/>
        <dbReference type="ChEBI" id="CHEBI:15378"/>
        <dbReference type="ChEBI" id="CHEBI:16389"/>
        <dbReference type="ChEBI" id="CHEBI:17976"/>
        <dbReference type="ChEBI" id="CHEBI:57540"/>
        <dbReference type="ChEBI" id="CHEBI:57945"/>
        <dbReference type="EC" id="7.1.1.2"/>
    </reaction>
    <physiologicalReaction direction="left-to-right" evidence="1">
        <dbReference type="Rhea" id="RHEA:29092"/>
    </physiologicalReaction>
</comment>
<comment type="subunit">
    <text evidence="2">Core subunit of respiratory chain NADH dehydrogenase (Complex I) which is composed of 45 different subunits.</text>
</comment>
<comment type="subcellular location">
    <subcellularLocation>
        <location evidence="2">Mitochondrion inner membrane</location>
        <topology evidence="3">Multi-pass membrane protein</topology>
    </subcellularLocation>
</comment>
<comment type="similarity">
    <text evidence="4">Belongs to the complex I subunit 4L family.</text>
</comment>
<accession>Q94Z64</accession>
<protein>
    <recommendedName>
        <fullName>NADH-ubiquinone oxidoreductase chain 4L</fullName>
        <ecNumber>7.1.1.2</ecNumber>
    </recommendedName>
    <alternativeName>
        <fullName>NADH dehydrogenase subunit 4L</fullName>
    </alternativeName>
</protein>
<organism>
    <name type="scientific">Nycticebus coucang</name>
    <name type="common">Slow loris</name>
    <dbReference type="NCBI Taxonomy" id="9470"/>
    <lineage>
        <taxon>Eukaryota</taxon>
        <taxon>Metazoa</taxon>
        <taxon>Chordata</taxon>
        <taxon>Craniata</taxon>
        <taxon>Vertebrata</taxon>
        <taxon>Euteleostomi</taxon>
        <taxon>Mammalia</taxon>
        <taxon>Eutheria</taxon>
        <taxon>Euarchontoglires</taxon>
        <taxon>Primates</taxon>
        <taxon>Strepsirrhini</taxon>
        <taxon>Lorisiformes</taxon>
        <taxon>Lorisidae</taxon>
        <taxon>Nycticebus</taxon>
    </lineage>
</organism>
<sequence>MPLISTNILLAFITALLGVLIYRSHLMSSLLCLEGMMLSMFILVSLTTMNLHFTLANIAPLILLVFAACEAAVGLALLVMVSNTYGMDYIQNLNLLQC</sequence>
<reference key="1">
    <citation type="journal article" date="2000" name="Hereditas">
        <title>Molecular estimates of primate divergences and new hypotheses for primate dispersal and the origin of modern humans.</title>
        <authorList>
            <person name="Arnason U."/>
            <person name="Gullberg A."/>
            <person name="Burguete A.S."/>
            <person name="Janke A."/>
        </authorList>
    </citation>
    <scope>NUCLEOTIDE SEQUENCE [GENOMIC DNA]</scope>
</reference>
<name>NU4LM_NYCCO</name>
<gene>
    <name type="primary">MT-ND4L</name>
    <name type="synonym">MTND4L</name>
    <name type="synonym">NADH4L</name>
    <name type="synonym">ND4L</name>
</gene>
<feature type="chain" id="PRO_0000275077" description="NADH-ubiquinone oxidoreductase chain 4L">
    <location>
        <begin position="1"/>
        <end position="98"/>
    </location>
</feature>
<feature type="transmembrane region" description="Helical" evidence="3">
    <location>
        <begin position="1"/>
        <end position="21"/>
    </location>
</feature>
<feature type="transmembrane region" description="Helical" evidence="3">
    <location>
        <begin position="26"/>
        <end position="46"/>
    </location>
</feature>
<feature type="transmembrane region" description="Helical" evidence="3">
    <location>
        <begin position="61"/>
        <end position="81"/>
    </location>
</feature>